<comment type="function">
    <text evidence="1">Participates in chromosomal partition during cell division. May act via the formation of a condensin-like complex containing Smc and ScpB that pull DNA away from mid-cell into both cell halves.</text>
</comment>
<comment type="subunit">
    <text evidence="1">Component of a cohesin-like complex composed of ScpA, ScpB and the Smc homodimer, in which ScpA and ScpB bind to the head domain of Smc. The presence of the three proteins is required for the association of the complex with DNA.</text>
</comment>
<comment type="subcellular location">
    <subcellularLocation>
        <location evidence="1">Cytoplasm</location>
    </subcellularLocation>
    <text evidence="1">Associated with two foci at the outer edges of the nucleoid region in young cells, and at four foci within both cell halves in older cells.</text>
</comment>
<comment type="similarity">
    <text evidence="1">Belongs to the ScpA family.</text>
</comment>
<accession>Q5XDP4</accession>
<keyword id="KW-0131">Cell cycle</keyword>
<keyword id="KW-0132">Cell division</keyword>
<keyword id="KW-0159">Chromosome partition</keyword>
<keyword id="KW-0963">Cytoplasm</keyword>
<evidence type="ECO:0000255" key="1">
    <source>
        <dbReference type="HAMAP-Rule" id="MF_01805"/>
    </source>
</evidence>
<sequence length="234" mass="27352">MDIKLKDFEGPLDLLLHLVSQYKVDIYEVPIVEVIEQYLNYIETLQVMKLEVAGDYMLMASQLMLIKSRRLLPKVVEHIEEEDLEQDLLEKIEEYSRFKAVSQALAKQHDQRAKWYSKPKQELIFEDAILQEDKTVMDLFLAFSNIMAAKRAVLKNNHTVIERDDYKIEDMMASIKQRLEKESVISLSAIFEECQTLNEVISIFLASLELIKLHVVFVEQLSNFGAIILRKEKK</sequence>
<reference key="1">
    <citation type="journal article" date="2004" name="J. Infect. Dis.">
        <title>Progress toward characterization of the group A Streptococcus metagenome: complete genome sequence of a macrolide-resistant serotype M6 strain.</title>
        <authorList>
            <person name="Banks D.J."/>
            <person name="Porcella S.F."/>
            <person name="Barbian K.D."/>
            <person name="Beres S.B."/>
            <person name="Philips L.E."/>
            <person name="Voyich J.M."/>
            <person name="DeLeo F.R."/>
            <person name="Martin J.M."/>
            <person name="Somerville G.A."/>
            <person name="Musser J.M."/>
        </authorList>
    </citation>
    <scope>NUCLEOTIDE SEQUENCE [LARGE SCALE GENOMIC DNA]</scope>
    <source>
        <strain>ATCC BAA-946 / MGAS10394</strain>
    </source>
</reference>
<proteinExistence type="inferred from homology"/>
<protein>
    <recommendedName>
        <fullName evidence="1">Segregation and condensation protein A</fullName>
    </recommendedName>
</protein>
<feature type="chain" id="PRO_0000211118" description="Segregation and condensation protein A">
    <location>
        <begin position="1"/>
        <end position="234"/>
    </location>
</feature>
<name>SCPA_STRP6</name>
<organism>
    <name type="scientific">Streptococcus pyogenes serotype M6 (strain ATCC BAA-946 / MGAS10394)</name>
    <dbReference type="NCBI Taxonomy" id="286636"/>
    <lineage>
        <taxon>Bacteria</taxon>
        <taxon>Bacillati</taxon>
        <taxon>Bacillota</taxon>
        <taxon>Bacilli</taxon>
        <taxon>Lactobacillales</taxon>
        <taxon>Streptococcaceae</taxon>
        <taxon>Streptococcus</taxon>
    </lineage>
</organism>
<gene>
    <name evidence="1" type="primary">scpA</name>
    <name type="ordered locus">M6_Spy0334</name>
</gene>
<dbReference type="EMBL" id="CP000003">
    <property type="protein sequence ID" value="AAT86469.1"/>
    <property type="molecule type" value="Genomic_DNA"/>
</dbReference>
<dbReference type="RefSeq" id="WP_011184200.1">
    <property type="nucleotide sequence ID" value="NC_006086.1"/>
</dbReference>
<dbReference type="SMR" id="Q5XDP4"/>
<dbReference type="KEGG" id="spa:M6_Spy0334"/>
<dbReference type="HOGENOM" id="CLU_038686_3_3_9"/>
<dbReference type="Proteomes" id="UP000001167">
    <property type="component" value="Chromosome"/>
</dbReference>
<dbReference type="GO" id="GO:0005737">
    <property type="term" value="C:cytoplasm"/>
    <property type="evidence" value="ECO:0007669"/>
    <property type="project" value="UniProtKB-SubCell"/>
</dbReference>
<dbReference type="GO" id="GO:0051301">
    <property type="term" value="P:cell division"/>
    <property type="evidence" value="ECO:0007669"/>
    <property type="project" value="UniProtKB-KW"/>
</dbReference>
<dbReference type="GO" id="GO:0007059">
    <property type="term" value="P:chromosome segregation"/>
    <property type="evidence" value="ECO:0007669"/>
    <property type="project" value="UniProtKB-UniRule"/>
</dbReference>
<dbReference type="GO" id="GO:0006260">
    <property type="term" value="P:DNA replication"/>
    <property type="evidence" value="ECO:0007669"/>
    <property type="project" value="UniProtKB-UniRule"/>
</dbReference>
<dbReference type="Gene3D" id="6.10.250.2410">
    <property type="match status" value="1"/>
</dbReference>
<dbReference type="HAMAP" id="MF_01805">
    <property type="entry name" value="ScpA"/>
    <property type="match status" value="1"/>
</dbReference>
<dbReference type="InterPro" id="IPR003768">
    <property type="entry name" value="ScpA"/>
</dbReference>
<dbReference type="NCBIfam" id="NF000993">
    <property type="entry name" value="PRK00104.1-2"/>
    <property type="match status" value="1"/>
</dbReference>
<dbReference type="PANTHER" id="PTHR33969">
    <property type="entry name" value="SEGREGATION AND CONDENSATION PROTEIN A"/>
    <property type="match status" value="1"/>
</dbReference>
<dbReference type="PANTHER" id="PTHR33969:SF2">
    <property type="entry name" value="SEGREGATION AND CONDENSATION PROTEIN A"/>
    <property type="match status" value="1"/>
</dbReference>
<dbReference type="Pfam" id="PF02616">
    <property type="entry name" value="SMC_ScpA"/>
    <property type="match status" value="1"/>
</dbReference>